<keyword id="KW-0240">DNA-directed RNA polymerase</keyword>
<keyword id="KW-0548">Nucleotidyltransferase</keyword>
<keyword id="KW-1185">Reference proteome</keyword>
<keyword id="KW-0804">Transcription</keyword>
<keyword id="KW-0808">Transferase</keyword>
<feature type="chain" id="PRO_0000264511" description="DNA-directed RNA polymerase subunit alpha">
    <location>
        <begin position="1"/>
        <end position="347"/>
    </location>
</feature>
<feature type="region of interest" description="Alpha N-terminal domain (alpha-NTD)" evidence="1">
    <location>
        <begin position="1"/>
        <end position="243"/>
    </location>
</feature>
<feature type="region of interest" description="Alpha C-terminal domain (alpha-CTD)" evidence="1">
    <location>
        <begin position="255"/>
        <end position="347"/>
    </location>
</feature>
<proteinExistence type="inferred from homology"/>
<name>RPOA_LAWIP</name>
<evidence type="ECO:0000255" key="1">
    <source>
        <dbReference type="HAMAP-Rule" id="MF_00059"/>
    </source>
</evidence>
<gene>
    <name evidence="1" type="primary">rpoA</name>
    <name type="ordered locus">LI0982</name>
</gene>
<reference key="1">
    <citation type="submission" date="2005-11" db="EMBL/GenBank/DDBJ databases">
        <title>The complete genome sequence of Lawsonia intracellularis: the causative agent of proliferative enteropathy.</title>
        <authorList>
            <person name="Kaur K."/>
            <person name="Zhang Q."/>
            <person name="Beckler D."/>
            <person name="Munir S."/>
            <person name="Li L."/>
            <person name="Kinsley K."/>
            <person name="Herron L."/>
            <person name="Peterson A."/>
            <person name="May B."/>
            <person name="Singh S."/>
            <person name="Gebhart C."/>
            <person name="Kapur V."/>
        </authorList>
    </citation>
    <scope>NUCLEOTIDE SEQUENCE [LARGE SCALE GENOMIC DNA]</scope>
    <source>
        <strain>PHE/MN1-00</strain>
    </source>
</reference>
<comment type="function">
    <text evidence="1">DNA-dependent RNA polymerase catalyzes the transcription of DNA into RNA using the four ribonucleoside triphosphates as substrates.</text>
</comment>
<comment type="catalytic activity">
    <reaction evidence="1">
        <text>RNA(n) + a ribonucleoside 5'-triphosphate = RNA(n+1) + diphosphate</text>
        <dbReference type="Rhea" id="RHEA:21248"/>
        <dbReference type="Rhea" id="RHEA-COMP:14527"/>
        <dbReference type="Rhea" id="RHEA-COMP:17342"/>
        <dbReference type="ChEBI" id="CHEBI:33019"/>
        <dbReference type="ChEBI" id="CHEBI:61557"/>
        <dbReference type="ChEBI" id="CHEBI:140395"/>
        <dbReference type="EC" id="2.7.7.6"/>
    </reaction>
</comment>
<comment type="subunit">
    <text evidence="1">Homodimer. The RNAP catalytic core consists of 2 alpha, 1 beta, 1 beta' and 1 omega subunit. When a sigma factor is associated with the core the holoenzyme is formed, which can initiate transcription.</text>
</comment>
<comment type="domain">
    <text evidence="1">The N-terminal domain is essential for RNAP assembly and basal transcription, whereas the C-terminal domain is involved in interaction with transcriptional regulators and with upstream promoter elements.</text>
</comment>
<comment type="similarity">
    <text evidence="1">Belongs to the RNA polymerase alpha chain family.</text>
</comment>
<organism>
    <name type="scientific">Lawsonia intracellularis (strain PHE/MN1-00)</name>
    <dbReference type="NCBI Taxonomy" id="363253"/>
    <lineage>
        <taxon>Bacteria</taxon>
        <taxon>Pseudomonadati</taxon>
        <taxon>Thermodesulfobacteriota</taxon>
        <taxon>Desulfovibrionia</taxon>
        <taxon>Desulfovibrionales</taxon>
        <taxon>Desulfovibrionaceae</taxon>
        <taxon>Lawsonia</taxon>
    </lineage>
</organism>
<protein>
    <recommendedName>
        <fullName evidence="1">DNA-directed RNA polymerase subunit alpha</fullName>
        <shortName evidence="1">RNAP subunit alpha</shortName>
        <ecNumber evidence="1">2.7.7.6</ecNumber>
    </recommendedName>
    <alternativeName>
        <fullName evidence="1">RNA polymerase subunit alpha</fullName>
    </alternativeName>
    <alternativeName>
        <fullName evidence="1">Transcriptase subunit alpha</fullName>
    </alternativeName>
</protein>
<sequence length="347" mass="38940">MLFREGTRLINSRNWAKLVRPEAVINNMESNTTTYGRFEYEPLERGYGITIGNALRRVLLSSLQGAAFVSVKILGVQHEFTTIPGILEDVTDIILNLKQVRLAMDTDEPQHLSLFVSKKGIVTAADIQTNQHVEVLNPEQHIATLTEDIELRMEFEVRMGKGYVPAEMHEDLHEEIGLIKLDSSFSPIRNVTYVVEQARVGQMTNYDKLVLEVWTDGSVSPEDAIAYSAKIIKDQISVFINFDERISGSGGNEGSGSSDLNDNLFKGIDELELSVRATNCLRSANISTVGELVQKAEADMLKTKNFGKKSLDEIKALLTSMGLDFGMKIDGFEKKYQEWKRKQHHEA</sequence>
<accession>Q1MPP1</accession>
<dbReference type="EC" id="2.7.7.6" evidence="1"/>
<dbReference type="EMBL" id="AM180252">
    <property type="protein sequence ID" value="CAJ55036.1"/>
    <property type="molecule type" value="Genomic_DNA"/>
</dbReference>
<dbReference type="RefSeq" id="WP_011527065.1">
    <property type="nucleotide sequence ID" value="NC_008011.1"/>
</dbReference>
<dbReference type="SMR" id="Q1MPP1"/>
<dbReference type="STRING" id="363253.LI0982"/>
<dbReference type="KEGG" id="lip:LI0982"/>
<dbReference type="eggNOG" id="COG0202">
    <property type="taxonomic scope" value="Bacteria"/>
</dbReference>
<dbReference type="HOGENOM" id="CLU_053084_0_1_7"/>
<dbReference type="OrthoDB" id="9805706at2"/>
<dbReference type="Proteomes" id="UP000002430">
    <property type="component" value="Chromosome"/>
</dbReference>
<dbReference type="GO" id="GO:0005737">
    <property type="term" value="C:cytoplasm"/>
    <property type="evidence" value="ECO:0007669"/>
    <property type="project" value="UniProtKB-ARBA"/>
</dbReference>
<dbReference type="GO" id="GO:0000428">
    <property type="term" value="C:DNA-directed RNA polymerase complex"/>
    <property type="evidence" value="ECO:0007669"/>
    <property type="project" value="UniProtKB-KW"/>
</dbReference>
<dbReference type="GO" id="GO:0003677">
    <property type="term" value="F:DNA binding"/>
    <property type="evidence" value="ECO:0007669"/>
    <property type="project" value="UniProtKB-UniRule"/>
</dbReference>
<dbReference type="GO" id="GO:0003899">
    <property type="term" value="F:DNA-directed RNA polymerase activity"/>
    <property type="evidence" value="ECO:0007669"/>
    <property type="project" value="UniProtKB-UniRule"/>
</dbReference>
<dbReference type="GO" id="GO:0046983">
    <property type="term" value="F:protein dimerization activity"/>
    <property type="evidence" value="ECO:0007669"/>
    <property type="project" value="InterPro"/>
</dbReference>
<dbReference type="GO" id="GO:0006351">
    <property type="term" value="P:DNA-templated transcription"/>
    <property type="evidence" value="ECO:0007669"/>
    <property type="project" value="UniProtKB-UniRule"/>
</dbReference>
<dbReference type="CDD" id="cd06928">
    <property type="entry name" value="RNAP_alpha_NTD"/>
    <property type="match status" value="1"/>
</dbReference>
<dbReference type="FunFam" id="1.10.150.20:FF:000001">
    <property type="entry name" value="DNA-directed RNA polymerase subunit alpha"/>
    <property type="match status" value="1"/>
</dbReference>
<dbReference type="FunFam" id="2.170.120.12:FF:000001">
    <property type="entry name" value="DNA-directed RNA polymerase subunit alpha"/>
    <property type="match status" value="1"/>
</dbReference>
<dbReference type="Gene3D" id="1.10.150.20">
    <property type="entry name" value="5' to 3' exonuclease, C-terminal subdomain"/>
    <property type="match status" value="1"/>
</dbReference>
<dbReference type="Gene3D" id="2.170.120.12">
    <property type="entry name" value="DNA-directed RNA polymerase, insert domain"/>
    <property type="match status" value="1"/>
</dbReference>
<dbReference type="Gene3D" id="3.30.1360.10">
    <property type="entry name" value="RNA polymerase, RBP11-like subunit"/>
    <property type="match status" value="1"/>
</dbReference>
<dbReference type="HAMAP" id="MF_00059">
    <property type="entry name" value="RNApol_bact_RpoA"/>
    <property type="match status" value="1"/>
</dbReference>
<dbReference type="InterPro" id="IPR011262">
    <property type="entry name" value="DNA-dir_RNA_pol_insert"/>
</dbReference>
<dbReference type="InterPro" id="IPR011263">
    <property type="entry name" value="DNA-dir_RNA_pol_RpoA/D/Rpb3"/>
</dbReference>
<dbReference type="InterPro" id="IPR011773">
    <property type="entry name" value="DNA-dir_RpoA"/>
</dbReference>
<dbReference type="InterPro" id="IPR036603">
    <property type="entry name" value="RBP11-like"/>
</dbReference>
<dbReference type="InterPro" id="IPR011260">
    <property type="entry name" value="RNAP_asu_C"/>
</dbReference>
<dbReference type="InterPro" id="IPR036643">
    <property type="entry name" value="RNApol_insert_sf"/>
</dbReference>
<dbReference type="NCBIfam" id="NF003513">
    <property type="entry name" value="PRK05182.1-2"/>
    <property type="match status" value="1"/>
</dbReference>
<dbReference type="NCBIfam" id="NF003519">
    <property type="entry name" value="PRK05182.2-5"/>
    <property type="match status" value="1"/>
</dbReference>
<dbReference type="NCBIfam" id="TIGR02027">
    <property type="entry name" value="rpoA"/>
    <property type="match status" value="1"/>
</dbReference>
<dbReference type="Pfam" id="PF01000">
    <property type="entry name" value="RNA_pol_A_bac"/>
    <property type="match status" value="1"/>
</dbReference>
<dbReference type="Pfam" id="PF03118">
    <property type="entry name" value="RNA_pol_A_CTD"/>
    <property type="match status" value="1"/>
</dbReference>
<dbReference type="Pfam" id="PF01193">
    <property type="entry name" value="RNA_pol_L"/>
    <property type="match status" value="1"/>
</dbReference>
<dbReference type="SMART" id="SM00662">
    <property type="entry name" value="RPOLD"/>
    <property type="match status" value="1"/>
</dbReference>
<dbReference type="SUPFAM" id="SSF47789">
    <property type="entry name" value="C-terminal domain of RNA polymerase alpha subunit"/>
    <property type="match status" value="1"/>
</dbReference>
<dbReference type="SUPFAM" id="SSF56553">
    <property type="entry name" value="Insert subdomain of RNA polymerase alpha subunit"/>
    <property type="match status" value="1"/>
</dbReference>
<dbReference type="SUPFAM" id="SSF55257">
    <property type="entry name" value="RBP11-like subunits of RNA polymerase"/>
    <property type="match status" value="1"/>
</dbReference>